<name>HIS63_VIBVY</name>
<evidence type="ECO:0000250" key="1"/>
<evidence type="ECO:0000255" key="2"/>
<evidence type="ECO:0000305" key="3"/>
<protein>
    <recommendedName>
        <fullName>Putative imidazole glycerol phosphate synthase subunit hisF3</fullName>
        <ecNumber>4.3.2.10</ecNumber>
    </recommendedName>
    <alternativeName>
        <fullName>IGP synthase cyclase subunit</fullName>
    </alternativeName>
    <alternativeName>
        <fullName>IGP synthase subunit hisF3</fullName>
    </alternativeName>
    <alternativeName>
        <fullName>ImGP synthase subunit hisF3</fullName>
        <shortName>IGPS subunit hisF3</shortName>
    </alternativeName>
</protein>
<accession>Q7MPK7</accession>
<reference key="1">
    <citation type="journal article" date="2003" name="Genome Res.">
        <title>Comparative genome analysis of Vibrio vulnificus, a marine pathogen.</title>
        <authorList>
            <person name="Chen C.-Y."/>
            <person name="Wu K.-M."/>
            <person name="Chang Y.-C."/>
            <person name="Chang C.-H."/>
            <person name="Tsai H.-C."/>
            <person name="Liao T.-L."/>
            <person name="Liu Y.-M."/>
            <person name="Chen H.-J."/>
            <person name="Shen A.B.-T."/>
            <person name="Li J.-C."/>
            <person name="Su T.-L."/>
            <person name="Shao C.-P."/>
            <person name="Lee C.-T."/>
            <person name="Hor L.-I."/>
            <person name="Tsai S.-F."/>
        </authorList>
    </citation>
    <scope>NUCLEOTIDE SEQUENCE [LARGE SCALE GENOMIC DNA]</scope>
    <source>
        <strain>YJ016</strain>
    </source>
</reference>
<proteinExistence type="inferred from homology"/>
<keyword id="KW-0028">Amino-acid biosynthesis</keyword>
<keyword id="KW-0963">Cytoplasm</keyword>
<keyword id="KW-0368">Histidine biosynthesis</keyword>
<keyword id="KW-0456">Lyase</keyword>
<sequence>MRVYRMLRSRVIPVLLMREKGLVKTVKFKEGKYVGDPLNAVKIFNEQEADELTLLDIDASRLGHEPDYVLIERIASECRMPLCYGGGIKTVEQAERILKLGVEKVSLSSAVFENPKIITQLAERVGRQSIVVCLDVKKRLFGSKFDCFTINGTKKQSVDTIEFVKQIQTLGAGEIVLNFIDNDGVMKGYDLDAVSKFKALVKVPLTVVGGAGCVDDIAKLVQQEKLVGAAAGSLFVFKGKYKAVLINYPSPSEKKKALEL</sequence>
<comment type="function">
    <text evidence="1">IGPS catalyzes the conversion of PRFAR and glutamine to IGP, AICAR and glutamate. The HisF subunit catalyzes the cyclization activity that produces IGP and AICAR from PRFAR using the ammonia provided by the HisH subunit (By similarity).</text>
</comment>
<comment type="catalytic activity">
    <reaction>
        <text>5-[(5-phospho-1-deoxy-D-ribulos-1-ylimino)methylamino]-1-(5-phospho-beta-D-ribosyl)imidazole-4-carboxamide + L-glutamine = D-erythro-1-(imidazol-4-yl)glycerol 3-phosphate + 5-amino-1-(5-phospho-beta-D-ribosyl)imidazole-4-carboxamide + L-glutamate + H(+)</text>
        <dbReference type="Rhea" id="RHEA:24793"/>
        <dbReference type="ChEBI" id="CHEBI:15378"/>
        <dbReference type="ChEBI" id="CHEBI:29985"/>
        <dbReference type="ChEBI" id="CHEBI:58278"/>
        <dbReference type="ChEBI" id="CHEBI:58359"/>
        <dbReference type="ChEBI" id="CHEBI:58475"/>
        <dbReference type="ChEBI" id="CHEBI:58525"/>
        <dbReference type="EC" id="4.3.2.10"/>
    </reaction>
</comment>
<comment type="pathway">
    <text>Amino-acid biosynthesis; L-histidine biosynthesis; L-histidine from 5-phospho-alpha-D-ribose 1-diphosphate: step 5/9.</text>
</comment>
<comment type="subunit">
    <text evidence="1">Heterodimer of HisH and HisF.</text>
</comment>
<comment type="subcellular location">
    <subcellularLocation>
        <location evidence="1">Cytoplasm</location>
    </subcellularLocation>
</comment>
<comment type="similarity">
    <text evidence="3">Belongs to the HisA/HisF family.</text>
</comment>
<comment type="caution">
    <text evidence="3">The potential active site Asp residue in position 16 is replaced by a Leu.</text>
</comment>
<gene>
    <name type="primary">hisF3</name>
    <name type="ordered locus">VV0356</name>
</gene>
<dbReference type="EC" id="4.3.2.10"/>
<dbReference type="EMBL" id="BA000037">
    <property type="protein sequence ID" value="BAC93120.1"/>
    <property type="molecule type" value="Genomic_DNA"/>
</dbReference>
<dbReference type="SMR" id="Q7MPK7"/>
<dbReference type="KEGG" id="vvy:VV0356"/>
<dbReference type="HOGENOM" id="CLU_048577_4_0_6"/>
<dbReference type="UniPathway" id="UPA00031">
    <property type="reaction ID" value="UER00010"/>
</dbReference>
<dbReference type="Proteomes" id="UP000002675">
    <property type="component" value="Chromosome I"/>
</dbReference>
<dbReference type="GO" id="GO:0005737">
    <property type="term" value="C:cytoplasm"/>
    <property type="evidence" value="ECO:0007669"/>
    <property type="project" value="UniProtKB-SubCell"/>
</dbReference>
<dbReference type="GO" id="GO:0000107">
    <property type="term" value="F:imidazoleglycerol-phosphate synthase activity"/>
    <property type="evidence" value="ECO:0007669"/>
    <property type="project" value="InterPro"/>
</dbReference>
<dbReference type="GO" id="GO:0016829">
    <property type="term" value="F:lyase activity"/>
    <property type="evidence" value="ECO:0007669"/>
    <property type="project" value="UniProtKB-KW"/>
</dbReference>
<dbReference type="GO" id="GO:0000105">
    <property type="term" value="P:L-histidine biosynthetic process"/>
    <property type="evidence" value="ECO:0007669"/>
    <property type="project" value="UniProtKB-UniPathway"/>
</dbReference>
<dbReference type="CDD" id="cd04731">
    <property type="entry name" value="HisF"/>
    <property type="match status" value="1"/>
</dbReference>
<dbReference type="Gene3D" id="3.20.20.70">
    <property type="entry name" value="Aldolase class I"/>
    <property type="match status" value="1"/>
</dbReference>
<dbReference type="InterPro" id="IPR013785">
    <property type="entry name" value="Aldolase_TIM"/>
</dbReference>
<dbReference type="InterPro" id="IPR006062">
    <property type="entry name" value="His_biosynth"/>
</dbReference>
<dbReference type="InterPro" id="IPR004651">
    <property type="entry name" value="HisF"/>
</dbReference>
<dbReference type="InterPro" id="IPR050064">
    <property type="entry name" value="IGPS_HisA/HisF"/>
</dbReference>
<dbReference type="InterPro" id="IPR011060">
    <property type="entry name" value="RibuloseP-bd_barrel"/>
</dbReference>
<dbReference type="NCBIfam" id="NF038364">
    <property type="entry name" value="AglZ_HisF2_fam"/>
    <property type="match status" value="1"/>
</dbReference>
<dbReference type="PANTHER" id="PTHR21235:SF2">
    <property type="entry name" value="IMIDAZOLE GLYCEROL PHOSPHATE SYNTHASE HISHF"/>
    <property type="match status" value="1"/>
</dbReference>
<dbReference type="PANTHER" id="PTHR21235">
    <property type="entry name" value="IMIDAZOLE GLYCEROL PHOSPHATE SYNTHASE SUBUNIT HISF/H IGP SYNTHASE SUBUNIT HISF/H"/>
    <property type="match status" value="1"/>
</dbReference>
<dbReference type="Pfam" id="PF00977">
    <property type="entry name" value="His_biosynth"/>
    <property type="match status" value="1"/>
</dbReference>
<dbReference type="SUPFAM" id="SSF51366">
    <property type="entry name" value="Ribulose-phoshate binding barrel"/>
    <property type="match status" value="1"/>
</dbReference>
<feature type="chain" id="PRO_0000142263" description="Putative imidazole glycerol phosphate synthase subunit hisF3">
    <location>
        <begin position="1"/>
        <end position="260"/>
    </location>
</feature>
<feature type="active site" evidence="2">
    <location>
        <position position="135"/>
    </location>
</feature>
<organism>
    <name type="scientific">Vibrio vulnificus (strain YJ016)</name>
    <dbReference type="NCBI Taxonomy" id="196600"/>
    <lineage>
        <taxon>Bacteria</taxon>
        <taxon>Pseudomonadati</taxon>
        <taxon>Pseudomonadota</taxon>
        <taxon>Gammaproteobacteria</taxon>
        <taxon>Vibrionales</taxon>
        <taxon>Vibrionaceae</taxon>
        <taxon>Vibrio</taxon>
    </lineage>
</organism>